<evidence type="ECO:0000255" key="1">
    <source>
        <dbReference type="HAMAP-Rule" id="MF_00254"/>
    </source>
</evidence>
<protein>
    <recommendedName>
        <fullName evidence="1">Glycine--tRNA ligase alpha subunit</fullName>
        <ecNumber evidence="1">6.1.1.14</ecNumber>
    </recommendedName>
    <alternativeName>
        <fullName evidence="1">Glycyl-tRNA synthetase alpha subunit</fullName>
        <shortName evidence="1">GlyRS</shortName>
    </alternativeName>
</protein>
<name>SYGA_NATTJ</name>
<gene>
    <name evidence="1" type="primary">glyQ</name>
    <name type="ordered locus">Nther_1207</name>
</gene>
<accession>B2A1Y5</accession>
<reference key="1">
    <citation type="submission" date="2008-04" db="EMBL/GenBank/DDBJ databases">
        <title>Complete sequence of chromosome of Natranaerobius thermophilus JW/NM-WN-LF.</title>
        <authorList>
            <consortium name="US DOE Joint Genome Institute"/>
            <person name="Copeland A."/>
            <person name="Lucas S."/>
            <person name="Lapidus A."/>
            <person name="Glavina del Rio T."/>
            <person name="Dalin E."/>
            <person name="Tice H."/>
            <person name="Bruce D."/>
            <person name="Goodwin L."/>
            <person name="Pitluck S."/>
            <person name="Chertkov O."/>
            <person name="Brettin T."/>
            <person name="Detter J.C."/>
            <person name="Han C."/>
            <person name="Kuske C.R."/>
            <person name="Schmutz J."/>
            <person name="Larimer F."/>
            <person name="Land M."/>
            <person name="Hauser L."/>
            <person name="Kyrpides N."/>
            <person name="Lykidis A."/>
            <person name="Mesbah N.M."/>
            <person name="Wiegel J."/>
        </authorList>
    </citation>
    <scope>NUCLEOTIDE SEQUENCE [LARGE SCALE GENOMIC DNA]</scope>
    <source>
        <strain>ATCC BAA-1301 / DSM 18059 / JW/NM-WN-LF</strain>
    </source>
</reference>
<comment type="catalytic activity">
    <reaction evidence="1">
        <text>tRNA(Gly) + glycine + ATP = glycyl-tRNA(Gly) + AMP + diphosphate</text>
        <dbReference type="Rhea" id="RHEA:16013"/>
        <dbReference type="Rhea" id="RHEA-COMP:9664"/>
        <dbReference type="Rhea" id="RHEA-COMP:9683"/>
        <dbReference type="ChEBI" id="CHEBI:30616"/>
        <dbReference type="ChEBI" id="CHEBI:33019"/>
        <dbReference type="ChEBI" id="CHEBI:57305"/>
        <dbReference type="ChEBI" id="CHEBI:78442"/>
        <dbReference type="ChEBI" id="CHEBI:78522"/>
        <dbReference type="ChEBI" id="CHEBI:456215"/>
        <dbReference type="EC" id="6.1.1.14"/>
    </reaction>
</comment>
<comment type="subunit">
    <text evidence="1">Tetramer of two alpha and two beta subunits.</text>
</comment>
<comment type="subcellular location">
    <subcellularLocation>
        <location evidence="1">Cytoplasm</location>
    </subcellularLocation>
</comment>
<comment type="similarity">
    <text evidence="1">Belongs to the class-II aminoacyl-tRNA synthetase family.</text>
</comment>
<feature type="chain" id="PRO_1000101208" description="Glycine--tRNA ligase alpha subunit">
    <location>
        <begin position="1"/>
        <end position="294"/>
    </location>
</feature>
<sequence>MNFQDLMFSLLNYWKDQECLVWQPYDIEKGAGTMNPATFLRALGPEPWNVAYLEPSRRPTDGRYGENPNRLYQHHQIQVIMKPTPDDIQERYLESLQALGINPLEHDIRFVEDNWESPTLGAWGLGWEVWLDGMEITQFTYFQQVGGIDVDKVSCEITYGLERIAMYLQGVENVFDIKWNDQVTYGELFKHAEYEHSKFSFEDSDTEVLFKEFELYEKEAKRLLNQGLVLPGYDYVLKCSHTFNLLDARGAISVTERTGYIGRVRDLARICAKAFLSQREELNYPLLKEGISYA</sequence>
<organism>
    <name type="scientific">Natranaerobius thermophilus (strain ATCC BAA-1301 / DSM 18059 / JW/NM-WN-LF)</name>
    <dbReference type="NCBI Taxonomy" id="457570"/>
    <lineage>
        <taxon>Bacteria</taxon>
        <taxon>Bacillati</taxon>
        <taxon>Bacillota</taxon>
        <taxon>Clostridia</taxon>
        <taxon>Natranaerobiales</taxon>
        <taxon>Natranaerobiaceae</taxon>
        <taxon>Natranaerobius</taxon>
    </lineage>
</organism>
<dbReference type="EC" id="6.1.1.14" evidence="1"/>
<dbReference type="EMBL" id="CP001034">
    <property type="protein sequence ID" value="ACB84790.1"/>
    <property type="molecule type" value="Genomic_DNA"/>
</dbReference>
<dbReference type="RefSeq" id="WP_012447665.1">
    <property type="nucleotide sequence ID" value="NC_010718.1"/>
</dbReference>
<dbReference type="SMR" id="B2A1Y5"/>
<dbReference type="FunCoup" id="B2A1Y5">
    <property type="interactions" value="215"/>
</dbReference>
<dbReference type="STRING" id="457570.Nther_1207"/>
<dbReference type="KEGG" id="nth:Nther_1207"/>
<dbReference type="eggNOG" id="COG0752">
    <property type="taxonomic scope" value="Bacteria"/>
</dbReference>
<dbReference type="HOGENOM" id="CLU_057066_1_0_9"/>
<dbReference type="InParanoid" id="B2A1Y5"/>
<dbReference type="OrthoDB" id="9802183at2"/>
<dbReference type="Proteomes" id="UP000001683">
    <property type="component" value="Chromosome"/>
</dbReference>
<dbReference type="GO" id="GO:0005829">
    <property type="term" value="C:cytosol"/>
    <property type="evidence" value="ECO:0007669"/>
    <property type="project" value="TreeGrafter"/>
</dbReference>
<dbReference type="GO" id="GO:0005524">
    <property type="term" value="F:ATP binding"/>
    <property type="evidence" value="ECO:0007669"/>
    <property type="project" value="UniProtKB-UniRule"/>
</dbReference>
<dbReference type="GO" id="GO:0140096">
    <property type="term" value="F:catalytic activity, acting on a protein"/>
    <property type="evidence" value="ECO:0007669"/>
    <property type="project" value="UniProtKB-ARBA"/>
</dbReference>
<dbReference type="GO" id="GO:0004820">
    <property type="term" value="F:glycine-tRNA ligase activity"/>
    <property type="evidence" value="ECO:0007669"/>
    <property type="project" value="UniProtKB-UniRule"/>
</dbReference>
<dbReference type="GO" id="GO:0016740">
    <property type="term" value="F:transferase activity"/>
    <property type="evidence" value="ECO:0007669"/>
    <property type="project" value="UniProtKB-ARBA"/>
</dbReference>
<dbReference type="GO" id="GO:0006426">
    <property type="term" value="P:glycyl-tRNA aminoacylation"/>
    <property type="evidence" value="ECO:0007669"/>
    <property type="project" value="UniProtKB-UniRule"/>
</dbReference>
<dbReference type="CDD" id="cd00733">
    <property type="entry name" value="GlyRS_alpha_core"/>
    <property type="match status" value="1"/>
</dbReference>
<dbReference type="FunFam" id="3.30.930.10:FF:000006">
    <property type="entry name" value="Glycine--tRNA ligase alpha subunit"/>
    <property type="match status" value="1"/>
</dbReference>
<dbReference type="Gene3D" id="3.30.930.10">
    <property type="entry name" value="Bira Bifunctional Protein, Domain 2"/>
    <property type="match status" value="1"/>
</dbReference>
<dbReference type="Gene3D" id="1.20.58.180">
    <property type="entry name" value="Class II aaRS and biotin synthetases, domain 2"/>
    <property type="match status" value="1"/>
</dbReference>
<dbReference type="HAMAP" id="MF_00254">
    <property type="entry name" value="Gly_tRNA_synth_alpha"/>
    <property type="match status" value="1"/>
</dbReference>
<dbReference type="InterPro" id="IPR045864">
    <property type="entry name" value="aa-tRNA-synth_II/BPL/LPL"/>
</dbReference>
<dbReference type="InterPro" id="IPR006194">
    <property type="entry name" value="Gly-tRNA-synth_heterodimer"/>
</dbReference>
<dbReference type="InterPro" id="IPR002310">
    <property type="entry name" value="Gly-tRNA_ligase_asu"/>
</dbReference>
<dbReference type="NCBIfam" id="TIGR00388">
    <property type="entry name" value="glyQ"/>
    <property type="match status" value="1"/>
</dbReference>
<dbReference type="NCBIfam" id="NF006827">
    <property type="entry name" value="PRK09348.1"/>
    <property type="match status" value="1"/>
</dbReference>
<dbReference type="PANTHER" id="PTHR30075:SF2">
    <property type="entry name" value="GLYCINE--TRNA LIGASE, CHLOROPLASTIC_MITOCHONDRIAL 2"/>
    <property type="match status" value="1"/>
</dbReference>
<dbReference type="PANTHER" id="PTHR30075">
    <property type="entry name" value="GLYCYL-TRNA SYNTHETASE"/>
    <property type="match status" value="1"/>
</dbReference>
<dbReference type="Pfam" id="PF02091">
    <property type="entry name" value="tRNA-synt_2e"/>
    <property type="match status" value="1"/>
</dbReference>
<dbReference type="PRINTS" id="PR01044">
    <property type="entry name" value="TRNASYNTHGA"/>
</dbReference>
<dbReference type="SUPFAM" id="SSF55681">
    <property type="entry name" value="Class II aaRS and biotin synthetases"/>
    <property type="match status" value="1"/>
</dbReference>
<dbReference type="PROSITE" id="PS50861">
    <property type="entry name" value="AA_TRNA_LIGASE_II_GLYAB"/>
    <property type="match status" value="1"/>
</dbReference>
<proteinExistence type="inferred from homology"/>
<keyword id="KW-0030">Aminoacyl-tRNA synthetase</keyword>
<keyword id="KW-0067">ATP-binding</keyword>
<keyword id="KW-0963">Cytoplasm</keyword>
<keyword id="KW-0436">Ligase</keyword>
<keyword id="KW-0547">Nucleotide-binding</keyword>
<keyword id="KW-0648">Protein biosynthesis</keyword>
<keyword id="KW-1185">Reference proteome</keyword>